<reference key="1">
    <citation type="journal article" date="2009" name="PLoS ONE">
        <title>Complete genome sequence of Francisella tularensis subspecies holarctica FTNF002-00.</title>
        <authorList>
            <person name="Barabote R.D."/>
            <person name="Xie G."/>
            <person name="Brettin T.S."/>
            <person name="Hinrichs S.H."/>
            <person name="Fey P.D."/>
            <person name="Jay J.J."/>
            <person name="Engle J.L."/>
            <person name="Godbole S.D."/>
            <person name="Noronha J.M."/>
            <person name="Scheuermann R.H."/>
            <person name="Zhou L.W."/>
            <person name="Lion C."/>
            <person name="Dempsey M.P."/>
        </authorList>
    </citation>
    <scope>NUCLEOTIDE SEQUENCE [LARGE SCALE GENOMIC DNA]</scope>
    <source>
        <strain>FTNF002-00 / FTA</strain>
    </source>
</reference>
<dbReference type="EMBL" id="CP000803">
    <property type="protein sequence ID" value="ABU62169.2"/>
    <property type="status" value="ALT_INIT"/>
    <property type="molecule type" value="Genomic_DNA"/>
</dbReference>
<dbReference type="RefSeq" id="WP_010031324.1">
    <property type="nucleotide sequence ID" value="NC_009749.1"/>
</dbReference>
<dbReference type="SMR" id="A7NDW6"/>
<dbReference type="KEGG" id="fta:FTA_1694"/>
<dbReference type="HOGENOM" id="CLU_170994_0_0_6"/>
<dbReference type="GO" id="GO:0005829">
    <property type="term" value="C:cytosol"/>
    <property type="evidence" value="ECO:0007669"/>
    <property type="project" value="TreeGrafter"/>
</dbReference>
<dbReference type="GO" id="GO:0005506">
    <property type="term" value="F:iron ion binding"/>
    <property type="evidence" value="ECO:0007669"/>
    <property type="project" value="UniProtKB-UniRule"/>
</dbReference>
<dbReference type="GO" id="GO:0034599">
    <property type="term" value="P:cellular response to oxidative stress"/>
    <property type="evidence" value="ECO:0007669"/>
    <property type="project" value="TreeGrafter"/>
</dbReference>
<dbReference type="Gene3D" id="1.10.3880.10">
    <property type="entry name" value="Fe(II) trafficking protein YggX"/>
    <property type="match status" value="1"/>
</dbReference>
<dbReference type="HAMAP" id="MF_00686">
    <property type="entry name" value="Fe_traffic_YggX"/>
    <property type="match status" value="1"/>
</dbReference>
<dbReference type="InterPro" id="IPR007457">
    <property type="entry name" value="Fe_traffick_prot_YggX"/>
</dbReference>
<dbReference type="InterPro" id="IPR036766">
    <property type="entry name" value="Fe_traffick_prot_YggX_sf"/>
</dbReference>
<dbReference type="NCBIfam" id="NF003817">
    <property type="entry name" value="PRK05408.1"/>
    <property type="match status" value="1"/>
</dbReference>
<dbReference type="PANTHER" id="PTHR36965">
    <property type="entry name" value="FE(2+)-TRAFFICKING PROTEIN-RELATED"/>
    <property type="match status" value="1"/>
</dbReference>
<dbReference type="PANTHER" id="PTHR36965:SF1">
    <property type="entry name" value="FE(2+)-TRAFFICKING PROTEIN-RELATED"/>
    <property type="match status" value="1"/>
</dbReference>
<dbReference type="Pfam" id="PF04362">
    <property type="entry name" value="Iron_traffic"/>
    <property type="match status" value="1"/>
</dbReference>
<dbReference type="PIRSF" id="PIRSF029827">
    <property type="entry name" value="Fe_traffic_YggX"/>
    <property type="match status" value="1"/>
</dbReference>
<dbReference type="SUPFAM" id="SSF111148">
    <property type="entry name" value="YggX-like"/>
    <property type="match status" value="1"/>
</dbReference>
<accession>A7NDW6</accession>
<name>FETP_FRATF</name>
<gene>
    <name type="ordered locus">FTA_1694</name>
</gene>
<protein>
    <recommendedName>
        <fullName evidence="1">Probable Fe(2+)-trafficking protein</fullName>
    </recommendedName>
</protein>
<organism>
    <name type="scientific">Francisella tularensis subsp. holarctica (strain FTNF002-00 / FTA)</name>
    <dbReference type="NCBI Taxonomy" id="458234"/>
    <lineage>
        <taxon>Bacteria</taxon>
        <taxon>Pseudomonadati</taxon>
        <taxon>Pseudomonadota</taxon>
        <taxon>Gammaproteobacteria</taxon>
        <taxon>Thiotrichales</taxon>
        <taxon>Francisellaceae</taxon>
        <taxon>Francisella</taxon>
    </lineage>
</organism>
<comment type="function">
    <text evidence="1">Could be a mediator in iron transactions between iron acquisition and iron-requiring processes, such as synthesis and/or repair of Fe-S clusters in biosynthetic enzymes.</text>
</comment>
<comment type="similarity">
    <text evidence="1">Belongs to the Fe(2+)-trafficking protein family.</text>
</comment>
<comment type="sequence caution" evidence="2">
    <conflict type="erroneous initiation">
        <sequence resource="EMBL-CDS" id="ABU62169"/>
    </conflict>
</comment>
<evidence type="ECO:0000255" key="1">
    <source>
        <dbReference type="HAMAP-Rule" id="MF_00686"/>
    </source>
</evidence>
<evidence type="ECO:0000305" key="2"/>
<sequence length="87" mass="10423">MTKVFCKKYHQELDAIPFQPLPGELGKKIHNEISNKAWQAWLAHQTILINEYRLNLIEPKAKEFLKEEMYKFLFEGKEEKPEQFSEI</sequence>
<keyword id="KW-0408">Iron</keyword>
<feature type="chain" id="PRO_1000045035" description="Probable Fe(2+)-trafficking protein">
    <location>
        <begin position="1"/>
        <end position="87"/>
    </location>
</feature>
<proteinExistence type="inferred from homology"/>